<proteinExistence type="inferred from homology"/>
<name>ENGB_ANADF</name>
<gene>
    <name evidence="1" type="primary">engB</name>
    <name type="ordered locus">Anae109_2672</name>
</gene>
<feature type="chain" id="PRO_1000005796" description="Probable GTP-binding protein EngB">
    <location>
        <begin position="1"/>
        <end position="216"/>
    </location>
</feature>
<feature type="domain" description="EngB-type G" evidence="1">
    <location>
        <begin position="24"/>
        <end position="205"/>
    </location>
</feature>
<feature type="binding site" evidence="1">
    <location>
        <begin position="32"/>
        <end position="39"/>
    </location>
    <ligand>
        <name>GTP</name>
        <dbReference type="ChEBI" id="CHEBI:37565"/>
    </ligand>
</feature>
<feature type="binding site" evidence="1">
    <location>
        <position position="39"/>
    </location>
    <ligand>
        <name>Mg(2+)</name>
        <dbReference type="ChEBI" id="CHEBI:18420"/>
    </ligand>
</feature>
<feature type="binding site" evidence="1">
    <location>
        <begin position="59"/>
        <end position="63"/>
    </location>
    <ligand>
        <name>GTP</name>
        <dbReference type="ChEBI" id="CHEBI:37565"/>
    </ligand>
</feature>
<feature type="binding site" evidence="1">
    <location>
        <position position="61"/>
    </location>
    <ligand>
        <name>Mg(2+)</name>
        <dbReference type="ChEBI" id="CHEBI:18420"/>
    </ligand>
</feature>
<feature type="binding site" evidence="1">
    <location>
        <begin position="86"/>
        <end position="89"/>
    </location>
    <ligand>
        <name>GTP</name>
        <dbReference type="ChEBI" id="CHEBI:37565"/>
    </ligand>
</feature>
<feature type="binding site" evidence="1">
    <location>
        <begin position="153"/>
        <end position="156"/>
    </location>
    <ligand>
        <name>GTP</name>
        <dbReference type="ChEBI" id="CHEBI:37565"/>
    </ligand>
</feature>
<feature type="binding site" evidence="1">
    <location>
        <begin position="184"/>
        <end position="186"/>
    </location>
    <ligand>
        <name>GTP</name>
        <dbReference type="ChEBI" id="CHEBI:37565"/>
    </ligand>
</feature>
<accession>A7HDS7</accession>
<dbReference type="EMBL" id="CP000769">
    <property type="protein sequence ID" value="ABS26873.1"/>
    <property type="molecule type" value="Genomic_DNA"/>
</dbReference>
<dbReference type="RefSeq" id="WP_012097471.1">
    <property type="nucleotide sequence ID" value="NC_009675.1"/>
</dbReference>
<dbReference type="SMR" id="A7HDS7"/>
<dbReference type="STRING" id="404589.Anae109_2672"/>
<dbReference type="KEGG" id="afw:Anae109_2672"/>
<dbReference type="eggNOG" id="COG0218">
    <property type="taxonomic scope" value="Bacteria"/>
</dbReference>
<dbReference type="HOGENOM" id="CLU_033732_3_0_7"/>
<dbReference type="OrthoDB" id="9804921at2"/>
<dbReference type="Proteomes" id="UP000006382">
    <property type="component" value="Chromosome"/>
</dbReference>
<dbReference type="GO" id="GO:0005829">
    <property type="term" value="C:cytosol"/>
    <property type="evidence" value="ECO:0007669"/>
    <property type="project" value="TreeGrafter"/>
</dbReference>
<dbReference type="GO" id="GO:0005525">
    <property type="term" value="F:GTP binding"/>
    <property type="evidence" value="ECO:0007669"/>
    <property type="project" value="UniProtKB-UniRule"/>
</dbReference>
<dbReference type="GO" id="GO:0046872">
    <property type="term" value="F:metal ion binding"/>
    <property type="evidence" value="ECO:0007669"/>
    <property type="project" value="UniProtKB-KW"/>
</dbReference>
<dbReference type="GO" id="GO:0000917">
    <property type="term" value="P:division septum assembly"/>
    <property type="evidence" value="ECO:0007669"/>
    <property type="project" value="UniProtKB-KW"/>
</dbReference>
<dbReference type="CDD" id="cd01876">
    <property type="entry name" value="YihA_EngB"/>
    <property type="match status" value="1"/>
</dbReference>
<dbReference type="Gene3D" id="3.40.50.300">
    <property type="entry name" value="P-loop containing nucleotide triphosphate hydrolases"/>
    <property type="match status" value="1"/>
</dbReference>
<dbReference type="HAMAP" id="MF_00321">
    <property type="entry name" value="GTPase_EngB"/>
    <property type="match status" value="1"/>
</dbReference>
<dbReference type="InterPro" id="IPR030393">
    <property type="entry name" value="G_ENGB_dom"/>
</dbReference>
<dbReference type="InterPro" id="IPR006073">
    <property type="entry name" value="GTP-bd"/>
</dbReference>
<dbReference type="InterPro" id="IPR019987">
    <property type="entry name" value="GTP-bd_ribosome_bio_YsxC"/>
</dbReference>
<dbReference type="InterPro" id="IPR027417">
    <property type="entry name" value="P-loop_NTPase"/>
</dbReference>
<dbReference type="NCBIfam" id="TIGR03598">
    <property type="entry name" value="GTPase_YsxC"/>
    <property type="match status" value="1"/>
</dbReference>
<dbReference type="PANTHER" id="PTHR11649:SF13">
    <property type="entry name" value="ENGB-TYPE G DOMAIN-CONTAINING PROTEIN"/>
    <property type="match status" value="1"/>
</dbReference>
<dbReference type="PANTHER" id="PTHR11649">
    <property type="entry name" value="MSS1/TRME-RELATED GTP-BINDING PROTEIN"/>
    <property type="match status" value="1"/>
</dbReference>
<dbReference type="Pfam" id="PF01926">
    <property type="entry name" value="MMR_HSR1"/>
    <property type="match status" value="1"/>
</dbReference>
<dbReference type="SUPFAM" id="SSF52540">
    <property type="entry name" value="P-loop containing nucleoside triphosphate hydrolases"/>
    <property type="match status" value="1"/>
</dbReference>
<dbReference type="PROSITE" id="PS51706">
    <property type="entry name" value="G_ENGB"/>
    <property type="match status" value="1"/>
</dbReference>
<keyword id="KW-0131">Cell cycle</keyword>
<keyword id="KW-0132">Cell division</keyword>
<keyword id="KW-0342">GTP-binding</keyword>
<keyword id="KW-0460">Magnesium</keyword>
<keyword id="KW-0479">Metal-binding</keyword>
<keyword id="KW-0547">Nucleotide-binding</keyword>
<keyword id="KW-1185">Reference proteome</keyword>
<keyword id="KW-0717">Septation</keyword>
<reference key="1">
    <citation type="journal article" date="2015" name="Genome Announc.">
        <title>Complete genome sequence of Anaeromyxobacter sp. Fw109-5, an anaerobic, metal-reducing bacterium isolated from a contaminated subsurface environment.</title>
        <authorList>
            <person name="Hwang C."/>
            <person name="Copeland A."/>
            <person name="Lucas S."/>
            <person name="Lapidus A."/>
            <person name="Barry K."/>
            <person name="Glavina Del Rio T."/>
            <person name="Dalin E."/>
            <person name="Tice H."/>
            <person name="Pitluck S."/>
            <person name="Sims D."/>
            <person name="Brettin T."/>
            <person name="Bruce D.C."/>
            <person name="Detter J.C."/>
            <person name="Han C.S."/>
            <person name="Schmutz J."/>
            <person name="Larimer F.W."/>
            <person name="Land M.L."/>
            <person name="Hauser L.J."/>
            <person name="Kyrpides N."/>
            <person name="Lykidis A."/>
            <person name="Richardson P."/>
            <person name="Belieav A."/>
            <person name="Sanford R.A."/>
            <person name="Loeffler F.E."/>
            <person name="Fields M.W."/>
        </authorList>
    </citation>
    <scope>NUCLEOTIDE SEQUENCE [LARGE SCALE GENOMIC DNA]</scope>
    <source>
        <strain>Fw109-5</strain>
    </source>
</reference>
<comment type="function">
    <text evidence="1">Necessary for normal cell division and for the maintenance of normal septation.</text>
</comment>
<comment type="cofactor">
    <cofactor evidence="1">
        <name>Mg(2+)</name>
        <dbReference type="ChEBI" id="CHEBI:18420"/>
    </cofactor>
</comment>
<comment type="similarity">
    <text evidence="1">Belongs to the TRAFAC class TrmE-Era-EngA-EngB-Septin-like GTPase superfamily. EngB GTPase family.</text>
</comment>
<sequence>MPVQVVSSEFVKTATRPPEWPRGQTPELAFVGRSNVGKSSMLNALTRKKGLARVSATPGRTRALQFFDVAYRPTPAARPRHVRFCDLPGYGYAKVSREERDRWAAMIEDYLRDRDVLRAVVLIVDARHAPSDSDVDAAAFLRATGRRVLVAATKMDKLPKTRRGAALRAVEGALALAKGEAVPFSAVEGTGTDALWARIASAATDEGAPAPAGAGA</sequence>
<evidence type="ECO:0000255" key="1">
    <source>
        <dbReference type="HAMAP-Rule" id="MF_00321"/>
    </source>
</evidence>
<organism>
    <name type="scientific">Anaeromyxobacter sp. (strain Fw109-5)</name>
    <dbReference type="NCBI Taxonomy" id="404589"/>
    <lineage>
        <taxon>Bacteria</taxon>
        <taxon>Pseudomonadati</taxon>
        <taxon>Myxococcota</taxon>
        <taxon>Myxococcia</taxon>
        <taxon>Myxococcales</taxon>
        <taxon>Cystobacterineae</taxon>
        <taxon>Anaeromyxobacteraceae</taxon>
        <taxon>Anaeromyxobacter</taxon>
    </lineage>
</organism>
<protein>
    <recommendedName>
        <fullName evidence="1">Probable GTP-binding protein EngB</fullName>
    </recommendedName>
</protein>